<organism>
    <name type="scientific">Oryctolagus cuniculus</name>
    <name type="common">Rabbit</name>
    <dbReference type="NCBI Taxonomy" id="9986"/>
    <lineage>
        <taxon>Eukaryota</taxon>
        <taxon>Metazoa</taxon>
        <taxon>Chordata</taxon>
        <taxon>Craniata</taxon>
        <taxon>Vertebrata</taxon>
        <taxon>Euteleostomi</taxon>
        <taxon>Mammalia</taxon>
        <taxon>Eutheria</taxon>
        <taxon>Euarchontoglires</taxon>
        <taxon>Glires</taxon>
        <taxon>Lagomorpha</taxon>
        <taxon>Leporidae</taxon>
        <taxon>Oryctolagus</taxon>
    </lineage>
</organism>
<sequence>MRTWACLLLLGCGYLAHVLAEEPGIPRDVLDRLARSQIHSIRDLQRLLEIDSVGAEDAPEPSLRAPGVHTARHVAEKPPAPVPVRRKRTIEEAIPAICKTRTVIYEIPRSQVDPTSANFLIWPPCVEVKRCTGCCNTSSVKCQPSRVHHRSVKVAKVEYVRKKPKLKEVQVRLEEHLECACAASSAGPEHREEEAGRRRESGKKRKRKRLRPT</sequence>
<dbReference type="PIR" id="JS0735">
    <property type="entry name" value="JS0735"/>
</dbReference>
<dbReference type="PIR" id="PS0387">
    <property type="entry name" value="PS0387"/>
</dbReference>
<dbReference type="SMR" id="P34007"/>
<dbReference type="FunCoup" id="P34007">
    <property type="interactions" value="16"/>
</dbReference>
<dbReference type="STRING" id="9986.ENSOCUP00000004907"/>
<dbReference type="GlyCosmos" id="P34007">
    <property type="glycosylation" value="1 site, No reported glycans"/>
</dbReference>
<dbReference type="PaxDb" id="9986-ENSOCUP00000004907"/>
<dbReference type="eggNOG" id="ENOG502QVAU">
    <property type="taxonomic scope" value="Eukaryota"/>
</dbReference>
<dbReference type="InParanoid" id="P34007"/>
<dbReference type="Proteomes" id="UP000001811">
    <property type="component" value="Unplaced"/>
</dbReference>
<dbReference type="GO" id="GO:0009986">
    <property type="term" value="C:cell surface"/>
    <property type="evidence" value="ECO:0000250"/>
    <property type="project" value="UniProtKB"/>
</dbReference>
<dbReference type="GO" id="GO:0005615">
    <property type="term" value="C:extracellular space"/>
    <property type="evidence" value="ECO:0000250"/>
    <property type="project" value="UniProtKB"/>
</dbReference>
<dbReference type="GO" id="GO:0016020">
    <property type="term" value="C:membrane"/>
    <property type="evidence" value="ECO:0007669"/>
    <property type="project" value="InterPro"/>
</dbReference>
<dbReference type="GO" id="GO:0005518">
    <property type="term" value="F:collagen binding"/>
    <property type="evidence" value="ECO:0000250"/>
    <property type="project" value="UniProtKB"/>
</dbReference>
<dbReference type="GO" id="GO:0008083">
    <property type="term" value="F:growth factor activity"/>
    <property type="evidence" value="ECO:0000250"/>
    <property type="project" value="UniProtKB"/>
</dbReference>
<dbReference type="GO" id="GO:0005161">
    <property type="term" value="F:platelet-derived growth factor receptor binding"/>
    <property type="evidence" value="ECO:0000250"/>
    <property type="project" value="UniProtKB"/>
</dbReference>
<dbReference type="GO" id="GO:0042803">
    <property type="term" value="F:protein homodimerization activity"/>
    <property type="evidence" value="ECO:0000250"/>
    <property type="project" value="UniProtKB"/>
</dbReference>
<dbReference type="GO" id="GO:0050919">
    <property type="term" value="P:negative chemotaxis"/>
    <property type="evidence" value="ECO:0000250"/>
    <property type="project" value="UniProtKB"/>
</dbReference>
<dbReference type="GO" id="GO:0010512">
    <property type="term" value="P:negative regulation of phosphatidylinositol biosynthetic process"/>
    <property type="evidence" value="ECO:0000250"/>
    <property type="project" value="UniProtKB"/>
</dbReference>
<dbReference type="GO" id="GO:0010544">
    <property type="term" value="P:negative regulation of platelet activation"/>
    <property type="evidence" value="ECO:0000250"/>
    <property type="project" value="UniProtKB"/>
</dbReference>
<dbReference type="GO" id="GO:0048008">
    <property type="term" value="P:platelet-derived growth factor receptor signaling pathway"/>
    <property type="evidence" value="ECO:0000250"/>
    <property type="project" value="UniProtKB"/>
</dbReference>
<dbReference type="GO" id="GO:0051781">
    <property type="term" value="P:positive regulation of cell division"/>
    <property type="evidence" value="ECO:0007669"/>
    <property type="project" value="UniProtKB-KW"/>
</dbReference>
<dbReference type="GO" id="GO:0030335">
    <property type="term" value="P:positive regulation of cell migration"/>
    <property type="evidence" value="ECO:0000250"/>
    <property type="project" value="UniProtKB"/>
</dbReference>
<dbReference type="GO" id="GO:0008284">
    <property type="term" value="P:positive regulation of cell population proliferation"/>
    <property type="evidence" value="ECO:0000250"/>
    <property type="project" value="UniProtKB"/>
</dbReference>
<dbReference type="GO" id="GO:0070374">
    <property type="term" value="P:positive regulation of ERK1 and ERK2 cascade"/>
    <property type="evidence" value="ECO:0000250"/>
    <property type="project" value="UniProtKB"/>
</dbReference>
<dbReference type="GO" id="GO:0048146">
    <property type="term" value="P:positive regulation of fibroblast proliferation"/>
    <property type="evidence" value="ECO:0000250"/>
    <property type="project" value="UniProtKB"/>
</dbReference>
<dbReference type="GO" id="GO:0043410">
    <property type="term" value="P:positive regulation of MAPK cascade"/>
    <property type="evidence" value="ECO:0000250"/>
    <property type="project" value="UniProtKB"/>
</dbReference>
<dbReference type="GO" id="GO:0035793">
    <property type="term" value="P:positive regulation of metanephric mesenchymal cell migration by platelet-derived growth factor receptor-beta signaling pathway"/>
    <property type="evidence" value="ECO:0000250"/>
    <property type="project" value="UniProtKB"/>
</dbReference>
<dbReference type="GO" id="GO:0051897">
    <property type="term" value="P:positive regulation of phosphatidylinositol 3-kinase/protein kinase B signal transduction"/>
    <property type="evidence" value="ECO:0000250"/>
    <property type="project" value="UniProtKB"/>
</dbReference>
<dbReference type="GO" id="GO:0031954">
    <property type="term" value="P:positive regulation of protein autophosphorylation"/>
    <property type="evidence" value="ECO:0000250"/>
    <property type="project" value="UniProtKB"/>
</dbReference>
<dbReference type="GO" id="GO:0014910">
    <property type="term" value="P:regulation of smooth muscle cell migration"/>
    <property type="evidence" value="ECO:0000250"/>
    <property type="project" value="UniProtKB"/>
</dbReference>
<dbReference type="GO" id="GO:0009611">
    <property type="term" value="P:response to wounding"/>
    <property type="evidence" value="ECO:0000250"/>
    <property type="project" value="UniProtKB"/>
</dbReference>
<dbReference type="CDD" id="cd00135">
    <property type="entry name" value="PDGF"/>
    <property type="match status" value="1"/>
</dbReference>
<dbReference type="FunFam" id="2.10.90.10:FF:000017">
    <property type="entry name" value="Platelet derived growth factor subunit A"/>
    <property type="match status" value="1"/>
</dbReference>
<dbReference type="Gene3D" id="2.10.90.10">
    <property type="entry name" value="Cystine-knot cytokines"/>
    <property type="match status" value="1"/>
</dbReference>
<dbReference type="InterPro" id="IPR029034">
    <property type="entry name" value="Cystine-knot_cytokine"/>
</dbReference>
<dbReference type="InterPro" id="IPR023581">
    <property type="entry name" value="PD_growth_factor_CS"/>
</dbReference>
<dbReference type="InterPro" id="IPR000072">
    <property type="entry name" value="PDGF/VEGF_dom"/>
</dbReference>
<dbReference type="InterPro" id="IPR006782">
    <property type="entry name" value="PDGF_N"/>
</dbReference>
<dbReference type="PANTHER" id="PTHR11633">
    <property type="entry name" value="PLATELET-DERIVED GROWTH FACTOR"/>
    <property type="match status" value="1"/>
</dbReference>
<dbReference type="PANTHER" id="PTHR11633:SF3">
    <property type="entry name" value="PLATELET-DERIVED GROWTH FACTOR SUBUNIT A"/>
    <property type="match status" value="1"/>
</dbReference>
<dbReference type="Pfam" id="PF00341">
    <property type="entry name" value="PDGF"/>
    <property type="match status" value="1"/>
</dbReference>
<dbReference type="Pfam" id="PF04692">
    <property type="entry name" value="PDGF_N"/>
    <property type="match status" value="1"/>
</dbReference>
<dbReference type="SMART" id="SM00141">
    <property type="entry name" value="PDGF"/>
    <property type="match status" value="1"/>
</dbReference>
<dbReference type="SUPFAM" id="SSF57501">
    <property type="entry name" value="Cystine-knot cytokines"/>
    <property type="match status" value="1"/>
</dbReference>
<dbReference type="PROSITE" id="PS00249">
    <property type="entry name" value="PDGF_1"/>
    <property type="match status" value="1"/>
</dbReference>
<dbReference type="PROSITE" id="PS50278">
    <property type="entry name" value="PDGF_2"/>
    <property type="match status" value="1"/>
</dbReference>
<name>PDGFA_RABIT</name>
<evidence type="ECO:0000250" key="1"/>
<evidence type="ECO:0000255" key="2"/>
<evidence type="ECO:0000256" key="3">
    <source>
        <dbReference type="SAM" id="MobiDB-lite"/>
    </source>
</evidence>
<evidence type="ECO:0000305" key="4"/>
<gene>
    <name type="primary">PDGFA</name>
</gene>
<accession>P34007</accession>
<protein>
    <recommendedName>
        <fullName>Platelet-derived growth factor subunit A</fullName>
        <shortName>PDGF subunit A</shortName>
    </recommendedName>
    <alternativeName>
        <fullName>PDGF-1</fullName>
    </alternativeName>
    <alternativeName>
        <fullName>Platelet-derived growth factor A chain</fullName>
    </alternativeName>
    <alternativeName>
        <fullName>Platelet-derived growth factor alpha polypeptide</fullName>
    </alternativeName>
</protein>
<keyword id="KW-0025">Alternative splicing</keyword>
<keyword id="KW-0217">Developmental protein</keyword>
<keyword id="KW-1015">Disulfide bond</keyword>
<keyword id="KW-0325">Glycoprotein</keyword>
<keyword id="KW-0339">Growth factor</keyword>
<keyword id="KW-0497">Mitogen</keyword>
<keyword id="KW-1185">Reference proteome</keyword>
<keyword id="KW-0964">Secreted</keyword>
<keyword id="KW-0732">Signal</keyword>
<reference key="1">
    <citation type="journal article" date="1992" name="Biochem. Biophys. Res. Commun.">
        <title>Identification of three types of PDGF-A chain gene transcripts in rabbit vascular smooth muscle and their regulated expression during development and by angiotensin II.</title>
        <authorList>
            <person name="Nakahara K."/>
            <person name="Nishimura H."/>
            <person name="Kuro-o M."/>
            <person name="Takewaki S."/>
            <person name="Iwase M."/>
            <person name="Ohkubo A."/>
            <person name="Yazaki Y."/>
            <person name="Nagai R."/>
        </authorList>
    </citation>
    <scope>NUCLEOTIDE SEQUENCE (ISOFORMS A1; A2 AND A3)</scope>
    <source>
        <tissue>Vascular smooth muscle</tissue>
    </source>
</reference>
<proteinExistence type="evidence at transcript level"/>
<comment type="function">
    <text evidence="1">Growth factor that plays an essential role in the regulation of embryonic development, cell proliferation, cell migration, survival and chemotaxis. Potent mitogen for cells of mesenchymal origin. Required for normal lung alveolar septum formation during embryogenesis, normal development of the gastrointestinal tract, normal development of Leydig cells and spermatogenesis. Required for normal oligodendrocyte development and normal myelination in the spinal cord and cerebellum. Plays an important role in wound healing. Signaling is modulated by the formation of heterodimers with PDGFB (By similarity).</text>
</comment>
<comment type="subunit">
    <text evidence="1">Homodimer; antiparallel disulfide-linked dimer. Heterodimer with PDGFB; antiparallel disulfide-linked dimer. The PDGFA homodimer interacts with PDGFRA homodimers, and with heterodimers formed by PDGFRA and PDGFRB. The heterodimer composed of PDGFA and PDGFB interacts with PDGFRA homodimers, and with heterodimers formed by PDGFRA and PDGFRB. Interacts with CSPG4 (By similarity).</text>
</comment>
<comment type="subcellular location">
    <subcellularLocation>
        <location>Secreted</location>
    </subcellularLocation>
    <text evidence="1">Released by platelets upon wounding.</text>
</comment>
<comment type="alternative products">
    <event type="alternative splicing"/>
    <isoform>
        <id>P34007-1</id>
        <name>A2</name>
        <sequence type="displayed"/>
    </isoform>
    <isoform>
        <id>P34007-2</id>
        <name>A1</name>
        <sequence type="described" ref="VSP_004606 VSP_004607"/>
    </isoform>
    <isoform>
        <id>P34007-3</id>
        <name>A3</name>
        <sequence type="described" ref="VSP_004608"/>
    </isoform>
</comment>
<comment type="induction">
    <text>The form A3 is selectively induced by angiotensin II.</text>
</comment>
<comment type="similarity">
    <text evidence="4">Belongs to the PDGF/VEGF growth factor family.</text>
</comment>
<feature type="signal peptide" evidence="1">
    <location>
        <begin position="1"/>
        <end position="20"/>
    </location>
</feature>
<feature type="propeptide" id="PRO_0000023360" description="Removed in mature form" evidence="1">
    <location>
        <begin position="21"/>
        <end position="89"/>
    </location>
</feature>
<feature type="chain" id="PRO_0000023361" description="Platelet-derived growth factor subunit A">
    <location>
        <begin position="90"/>
        <end position="213"/>
    </location>
</feature>
<feature type="region of interest" description="Receptor binding site" evidence="2">
    <location>
        <begin position="158"/>
        <end position="162"/>
    </location>
</feature>
<feature type="region of interest" description="Disordered" evidence="3">
    <location>
        <begin position="181"/>
        <end position="213"/>
    </location>
</feature>
<feature type="compositionally biased region" description="Basic and acidic residues" evidence="3">
    <location>
        <begin position="188"/>
        <end position="199"/>
    </location>
</feature>
<feature type="compositionally biased region" description="Basic residues" evidence="3">
    <location>
        <begin position="200"/>
        <end position="213"/>
    </location>
</feature>
<feature type="glycosylation site" description="N-linked (GlcNAc...) asparagine" evidence="2">
    <location>
        <position position="136"/>
    </location>
</feature>
<feature type="disulfide bond" description="Interchain" evidence="1">
    <location>
        <position position="125"/>
    </location>
</feature>
<feature type="disulfide bond" evidence="1">
    <location>
        <begin position="131"/>
        <end position="179"/>
    </location>
</feature>
<feature type="disulfide bond" description="Interchain" evidence="1">
    <location>
        <position position="134"/>
    </location>
</feature>
<feature type="disulfide bond" evidence="1">
    <location>
        <begin position="135"/>
        <end position="181"/>
    </location>
</feature>
<feature type="splice variant" id="VSP_004606" description="In isoform A1." evidence="4">
    <original>GRR</original>
    <variation>DVR</variation>
    <location>
        <begin position="196"/>
        <end position="198"/>
    </location>
</feature>
<feature type="splice variant" id="VSP_004608" description="In isoform A3." evidence="4">
    <original>RRRESGKKRKRKRLRPT</original>
    <variation>TLLPAPGGVHPQGCLRAHDGCQSSRNHMQALGWKKKM</variation>
    <location>
        <begin position="197"/>
        <end position="213"/>
    </location>
</feature>
<feature type="splice variant" id="VSP_004607" description="In isoform A1." evidence="4">
    <location>
        <begin position="199"/>
        <end position="213"/>
    </location>
</feature>